<sequence>MLDDRARMEATKKEKVEQILAEFQLQEEDLKKVMSRMQKEMDRGLKLETHQEASVKMLPTYVRSTPEGSEVGDFLSLDLGGTNFRVMLVKVGEGEAGQWSVKTKHQMYSIPEDAMTGTAEMLFDYISECISDFLDKHQMKHKKLPLGFTFSFPVRHEDIDKGILLNWTKGFKASGAEGNNIVGLLRDAIKRRGDFEMDVVAMVNDTVATMISCYYEDRQCEVGMIVGTGCNACYMEEMQNVELVEGDEGRMCVNTEWGAFGNSGELDEFLLEYDRMVDESSVNPGQQLYEKIIGGKYMGELVRLVLLKLVEENLLFHGEASEQLRTRGAFETRFVSQVESDSGDRRQILNILSTLGLRPSVADCDIVRRACESVSTRAAHMCSAGLAGVINRMRESRSEDVMRITVGVDGSVYKLHPSFKERFHASVRRLTPNCEITFIESEEGSGRGAALVSAVACKKACMLGQ</sequence>
<keyword id="KW-0021">Allosteric enzyme</keyword>
<keyword id="KW-0877">Alternative promoter usage</keyword>
<keyword id="KW-0025">Alternative splicing</keyword>
<keyword id="KW-0067">ATP-binding</keyword>
<keyword id="KW-0963">Cytoplasm</keyword>
<keyword id="KW-0324">Glycolysis</keyword>
<keyword id="KW-0418">Kinase</keyword>
<keyword id="KW-0496">Mitochondrion</keyword>
<keyword id="KW-0547">Nucleotide-binding</keyword>
<keyword id="KW-0539">Nucleus</keyword>
<keyword id="KW-1185">Reference proteome</keyword>
<keyword id="KW-0808">Transferase</keyword>
<comment type="function">
    <text evidence="1 3 9 10">Catalyzes the phosphorylation of hexose, such as D-glucose, D-fructose and D-mannose, to hexose 6-phosphate (D-glucose 6-phosphate, D-fructose 6-phosphate and D-mannose 6-phosphate, respectively) (PubMed:8530440). Compared to other hexokinases, has a weak affinity for D-glucose, and is effective only when glucose is abundant (By similarity). Mainly expressed in pancreatic beta cells and the liver and constitutes a rate-limiting step in glucose metabolism in these tissues (PubMed:8530440, PubMed:9867845). Since insulin secretion parallels glucose metabolism and the low glucose affinity of GCK ensures that it can change its enzymatic activity within the physiological range of glucose concentrations, GCK acts as a glucose sensor in the pancreatic beta cell (PubMed:8530440, PubMed:9867845). In pancreas, plays an important role in modulating insulin secretion (PubMed:8530440). In liver, helps to facilitate the uptake and conversion of glucose by acting as an insulin-sensitive determinant of hepatic glucose usage (PubMed:9867845). Required to provide D-glucose 6-phosphate for the synthesis of glycogen (PubMed:9867845). Mediates the initial step of glycolysis by catalyzing phosphorylation of D-glucose to D-glucose 6-phosphate (By similarity).</text>
</comment>
<comment type="catalytic activity">
    <reaction evidence="9">
        <text>a D-hexose + ATP = a D-hexose 6-phosphate + ADP + H(+)</text>
        <dbReference type="Rhea" id="RHEA:22740"/>
        <dbReference type="ChEBI" id="CHEBI:4194"/>
        <dbReference type="ChEBI" id="CHEBI:15378"/>
        <dbReference type="ChEBI" id="CHEBI:30616"/>
        <dbReference type="ChEBI" id="CHEBI:229467"/>
        <dbReference type="ChEBI" id="CHEBI:456216"/>
        <dbReference type="EC" id="2.7.1.1"/>
    </reaction>
    <physiologicalReaction direction="left-to-right" evidence="9">
        <dbReference type="Rhea" id="RHEA:22741"/>
    </physiologicalReaction>
</comment>
<comment type="catalytic activity">
    <reaction evidence="3">
        <text>D-fructose + ATP = D-fructose 6-phosphate + ADP + H(+)</text>
        <dbReference type="Rhea" id="RHEA:16125"/>
        <dbReference type="ChEBI" id="CHEBI:15378"/>
        <dbReference type="ChEBI" id="CHEBI:30616"/>
        <dbReference type="ChEBI" id="CHEBI:37721"/>
        <dbReference type="ChEBI" id="CHEBI:61527"/>
        <dbReference type="ChEBI" id="CHEBI:456216"/>
        <dbReference type="EC" id="2.7.1.1"/>
    </reaction>
    <physiologicalReaction direction="left-to-right" evidence="3">
        <dbReference type="Rhea" id="RHEA:16126"/>
    </physiologicalReaction>
</comment>
<comment type="catalytic activity">
    <reaction evidence="3">
        <text>D-glucose + ATP = D-glucose 6-phosphate + ADP + H(+)</text>
        <dbReference type="Rhea" id="RHEA:17825"/>
        <dbReference type="ChEBI" id="CHEBI:4167"/>
        <dbReference type="ChEBI" id="CHEBI:15378"/>
        <dbReference type="ChEBI" id="CHEBI:30616"/>
        <dbReference type="ChEBI" id="CHEBI:61548"/>
        <dbReference type="ChEBI" id="CHEBI:456216"/>
        <dbReference type="EC" id="2.7.1.1"/>
    </reaction>
    <physiologicalReaction direction="left-to-right" evidence="3">
        <dbReference type="Rhea" id="RHEA:17826"/>
    </physiologicalReaction>
</comment>
<comment type="catalytic activity">
    <reaction evidence="3">
        <text>D-mannose + ATP = D-mannose 6-phosphate + ADP + H(+)</text>
        <dbReference type="Rhea" id="RHEA:11028"/>
        <dbReference type="ChEBI" id="CHEBI:4208"/>
        <dbReference type="ChEBI" id="CHEBI:15378"/>
        <dbReference type="ChEBI" id="CHEBI:30616"/>
        <dbReference type="ChEBI" id="CHEBI:58735"/>
        <dbReference type="ChEBI" id="CHEBI:456216"/>
        <dbReference type="EC" id="2.7.1.1"/>
    </reaction>
    <physiologicalReaction direction="left-to-right" evidence="3">
        <dbReference type="Rhea" id="RHEA:11029"/>
    </physiologicalReaction>
</comment>
<comment type="activity regulation">
    <text evidence="3">Subject to allosteric regulation. Low glucose and high fructose-6-phosphate triggers association with the inhibitor GCKR followed by sequestration in the nucleus.</text>
</comment>
<comment type="pathway">
    <text evidence="15">Carbohydrate metabolism; hexose metabolism.</text>
</comment>
<comment type="pathway">
    <text evidence="15">Carbohydrate degradation; glycolysis; D-glyceraldehyde 3-phosphate and glycerone phosphate from D-glucose: step 1/4.</text>
</comment>
<comment type="subunit">
    <text evidence="3 5">Monomer (By similarity). Interacts with MIDN; the interaction occurs preferentially at low glucose levels and results in inhibition of hexokinase activity (By similarity). Interacts with GCKR; leading to sequestration in the nucleus (PubMed:10713097).</text>
</comment>
<comment type="subcellular location">
    <subcellularLocation>
        <location evidence="7">Cytoplasm</location>
    </subcellularLocation>
    <subcellularLocation>
        <location evidence="5">Nucleus</location>
    </subcellularLocation>
    <subcellularLocation>
        <location evidence="1">Mitochondrion</location>
    </subcellularLocation>
    <text evidence="5">Under low glucose concentrations, GCK associates with GCKR and the inactive complex is recruited to the hepatocyte nucleus.</text>
</comment>
<comment type="alternative products">
    <event type="alternative promoter"/>
    <event type="alternative splicing"/>
    <isoform>
        <id>P52792-1</id>
        <name>1</name>
        <sequence type="displayed"/>
    </isoform>
    <isoform>
        <id>P52792-2</id>
        <name>2</name>
        <sequence type="described" ref="VSP_002076"/>
    </isoform>
    <text evidence="3">A number of isoforms are produced by alternative promoter usage. The use of alternative promoters apparently enables the type IV hexokinase gene to be regulated by insulin in the liver and glucose in the beta cell. This may constitute an important feedback loop for maintaining glucose homeostasis.</text>
</comment>
<comment type="induction">
    <text evidence="6">Up-regulated by endocannabinoid anandamide/AEA.</text>
</comment>
<comment type="disruption phenotype">
    <text evidence="8 9 10">Embryonic lethality caused by the absence of hexokinase activity (PubMed:7665557). Conditional deletion in pancreatic beta-cells causes severe diabetes shortly after birth leading to lethality within a week (PubMed:8530440, PubMed:9867845). Deficient islets show defective insulin secretion in response to glucose (PubMed:8530440). Conditional deletion in liver leads to mild hyperglycemia; however, mice display pronounced defects in both glycogen synthesis and glucose turnover rates during a hyperglycemic clamp (PubMed:9867845).</text>
</comment>
<comment type="similarity">
    <text evidence="4 14">Belongs to the hexokinase family.</text>
</comment>
<proteinExistence type="evidence at protein level"/>
<reference key="1">
    <citation type="journal article" date="1995" name="Genomics">
        <title>Partial structure of the mouse glucokinase gene.</title>
        <authorList>
            <person name="Ishimura-Oka K."/>
            <person name="Nakamuta M."/>
            <person name="Chu M.J."/>
            <person name="Sullivan M."/>
            <person name="Chan L."/>
            <person name="Oka K."/>
        </authorList>
    </citation>
    <scope>NUCLEOTIDE SEQUENCE [MRNA] (ISOFORM 1)</scope>
</reference>
<reference key="2">
    <citation type="journal article" date="1995" name="Genomics">
        <title>Cloning and characterization of the mouse glucokinase gene locus and identification of distal liver-specific DNase I hypersensitive sites.</title>
        <authorList>
            <person name="Postic C."/>
            <person name="Niswender K.D."/>
            <person name="Decaux J.F."/>
            <person name="Shelton K.D."/>
            <person name="Gouhot B."/>
            <person name="Petterpher C.C."/>
            <person name="Granner D.K."/>
            <person name="Girard J."/>
            <person name="Magnuson M.A."/>
        </authorList>
    </citation>
    <scope>NUCLEOTIDE SEQUENCE [GENOMIC DNA] (ISOFORM 2)</scope>
    <source>
        <strain>129/Sv</strain>
        <tissue>Liver</tissue>
    </source>
</reference>
<reference key="3">
    <citation type="journal article" date="2004" name="Genome Res.">
        <title>The status, quality, and expansion of the NIH full-length cDNA project: the Mammalian Gene Collection (MGC).</title>
        <authorList>
            <consortium name="The MGC Project Team"/>
        </authorList>
    </citation>
    <scope>NUCLEOTIDE SEQUENCE [LARGE SCALE MRNA] (ISOFORM 2)</scope>
    <source>
        <strain>FVB/N</strain>
        <tissue>Liver</tissue>
    </source>
</reference>
<reference key="4">
    <citation type="journal article" date="1991" name="J. Biol. Chem.">
        <title>Expression of normal and novel glucokinase mRNAs in anterior pituitary and islet cells.</title>
        <authorList>
            <person name="Hughes S.D."/>
            <person name="Quaade C."/>
            <person name="Milburn J.L."/>
            <person name="Cassidy L."/>
            <person name="Newgard C.B."/>
        </authorList>
    </citation>
    <scope>NUCLEOTIDE SEQUENCE [MRNA] OF 1-166 (ISOFORM 1)</scope>
    <source>
        <tissue>Pancreas</tissue>
    </source>
</reference>
<reference key="5">
    <citation type="journal article" date="2010" name="Cell">
        <title>A tissue-specific atlas of mouse protein phosphorylation and expression.</title>
        <authorList>
            <person name="Huttlin E.L."/>
            <person name="Jedrychowski M.P."/>
            <person name="Elias J.E."/>
            <person name="Goswami T."/>
            <person name="Rad R."/>
            <person name="Beausoleil S.A."/>
            <person name="Villen J."/>
            <person name="Haas W."/>
            <person name="Sowa M.E."/>
            <person name="Gygi S.P."/>
        </authorList>
    </citation>
    <scope>IDENTIFICATION BY MASS SPECTROMETRY [LARGE SCALE ANALYSIS]</scope>
    <source>
        <tissue>Liver</tissue>
    </source>
</reference>
<reference key="6">
    <citation type="journal article" date="2012" name="Hepatology">
        <title>Antagonism of peripheral hepatic cannabinoid receptor-1 improves liver lipid metabolism in mice: evidence from cultured explants.</title>
        <authorList>
            <person name="Jourdan T."/>
            <person name="Demizieux L."/>
            <person name="Gresti J."/>
            <person name="Djaouti L."/>
            <person name="Gaba L."/>
            <person name="Verges B."/>
            <person name="Degrace P."/>
        </authorList>
    </citation>
    <scope>INDUCTION BY ENDOCANNABINOID ANANDAMIDE</scope>
</reference>
<reference key="7">
    <citation type="journal article" date="2013" name="J. Biol. Chem.">
        <title>Identification of the ubiquitin-like domain of midnolin as a new glucokinase interaction partner.</title>
        <authorList>
            <person name="Hofmeister-Brix A."/>
            <person name="Kollmann K."/>
            <person name="Langer S."/>
            <person name="Schultz J."/>
            <person name="Lenzen S."/>
            <person name="Baltrusch S."/>
        </authorList>
    </citation>
    <scope>SUBCELLULAR LOCATION</scope>
</reference>
<reference key="8">
    <citation type="journal article" date="1995" name="J. Biol. Chem.">
        <title>Animal model for maturity-onset diabetes of the young generated by disruption of the mouse glucokinase gene.</title>
        <authorList>
            <person name="Bali D."/>
            <person name="Svetlanov A."/>
            <person name="Lee H.W."/>
            <person name="Fusco-DeMane D."/>
            <person name="Leiser M."/>
            <person name="Li B."/>
            <person name="Barzilai N."/>
            <person name="Surana M."/>
            <person name="Hou H."/>
            <person name="Fleischer N."/>
        </authorList>
    </citation>
    <scope>DISRUPTION PHENOTYPE</scope>
</reference>
<reference key="9">
    <citation type="journal article" date="1995" name="J. Biol. Chem.">
        <title>Pancreatic beta-cell-specific targeted disruption of glucokinase gene. Diabetes mellitus due to defective insulin secretion to glucose.</title>
        <authorList>
            <person name="Terauchi Y."/>
            <person name="Sakura H."/>
            <person name="Yasuda K."/>
            <person name="Iwamoto K."/>
            <person name="Takahashi N."/>
            <person name="Ito K."/>
            <person name="Kasai H."/>
            <person name="Suzuki H."/>
            <person name="Ueda O."/>
            <person name="Kamada N."/>
        </authorList>
    </citation>
    <scope>FUNCTION</scope>
    <scope>CATALYTIC ACTIVITY</scope>
    <scope>DISRUPTION PHENOTYPE</scope>
</reference>
<reference key="10">
    <citation type="journal article" date="1999" name="J. Biol. Chem.">
        <title>Dual roles for glucokinase in glucose homeostasis as determined by liver and pancreatic beta cell-specific gene knock-outs using Cre recombinase.</title>
        <authorList>
            <person name="Postic C."/>
            <person name="Shiota M."/>
            <person name="Niswender K.D."/>
            <person name="Jetton T.L."/>
            <person name="Chen Y."/>
            <person name="Moates J.M."/>
            <person name="Shelton K.D."/>
            <person name="Lindner J."/>
            <person name="Cherrington A.D."/>
            <person name="Magnuson M.A."/>
        </authorList>
    </citation>
    <scope>FUNCTION</scope>
    <scope>DISRUPTION PHENOTYPE</scope>
</reference>
<reference key="11">
    <citation type="journal article" date="2000" name="J. Biol. Chem.">
        <title>Characterization of glucokinase regulatory protein-deficient mice.</title>
        <authorList>
            <person name="Grimsby J."/>
            <person name="Coffey J.W."/>
            <person name="Dvorozniak M.T."/>
            <person name="Magram J."/>
            <person name="Li G."/>
            <person name="Matschinsky F.M."/>
            <person name="Shiota C."/>
            <person name="Kaur S."/>
            <person name="Magnuson M.A."/>
            <person name="Grippo J.F."/>
        </authorList>
    </citation>
    <scope>SUBCELLULAR LOCATION</scope>
    <scope>INTERACTION WITH GCKR</scope>
</reference>
<gene>
    <name evidence="16" type="primary">Gck</name>
    <name evidence="12 13" type="synonym">Gk</name>
</gene>
<accession>P52792</accession>
<accession>P52791</accession>
<dbReference type="EC" id="2.7.1.1" evidence="9"/>
<dbReference type="EMBL" id="L38990">
    <property type="protein sequence ID" value="AAB00360.1"/>
    <property type="molecule type" value="mRNA"/>
</dbReference>
<dbReference type="EMBL" id="L41631">
    <property type="protein sequence ID" value="AAC42074.1"/>
    <property type="molecule type" value="Genomic_DNA"/>
</dbReference>
<dbReference type="EMBL" id="BC011139">
    <property type="protein sequence ID" value="AAH11139.1"/>
    <property type="molecule type" value="mRNA"/>
</dbReference>
<dbReference type="EMBL" id="M58755">
    <property type="protein sequence ID" value="AAA37703.1"/>
    <property type="molecule type" value="mRNA"/>
</dbReference>
<dbReference type="CCDS" id="CCDS24409.1">
    <molecule id="P52792-1"/>
</dbReference>
<dbReference type="CCDS" id="CCDS70135.1">
    <molecule id="P52792-2"/>
</dbReference>
<dbReference type="PIR" id="I49693">
    <property type="entry name" value="I49693"/>
</dbReference>
<dbReference type="PIR" id="I49694">
    <property type="entry name" value="I49694"/>
</dbReference>
<dbReference type="RefSeq" id="NP_001274315.1">
    <molecule id="P52792-2"/>
    <property type="nucleotide sequence ID" value="NM_001287386.1"/>
</dbReference>
<dbReference type="RefSeq" id="NP_034422.2">
    <molecule id="P52792-1"/>
    <property type="nucleotide sequence ID" value="NM_010292.5"/>
</dbReference>
<dbReference type="SMR" id="P52792"/>
<dbReference type="BioGRID" id="222262">
    <property type="interactions" value="4"/>
</dbReference>
<dbReference type="CORUM" id="P52792"/>
<dbReference type="FunCoup" id="P52792">
    <property type="interactions" value="921"/>
</dbReference>
<dbReference type="STRING" id="10090.ENSMUSP00000099984"/>
<dbReference type="BindingDB" id="P52792"/>
<dbReference type="ChEMBL" id="CHEMBL3112387"/>
<dbReference type="GlyGen" id="P52792">
    <property type="glycosylation" value="1 site, 1 O-linked glycan (1 site)"/>
</dbReference>
<dbReference type="iPTMnet" id="P52792"/>
<dbReference type="PhosphoSitePlus" id="P52792"/>
<dbReference type="SwissPalm" id="P52792"/>
<dbReference type="jPOST" id="P52792"/>
<dbReference type="PaxDb" id="10090-ENSMUSP00000099984"/>
<dbReference type="ProteomicsDB" id="267182">
    <molecule id="P52792-1"/>
</dbReference>
<dbReference type="ProteomicsDB" id="267183">
    <molecule id="P52792-2"/>
</dbReference>
<dbReference type="Antibodypedia" id="2045">
    <property type="antibodies" value="529 antibodies from 35 providers"/>
</dbReference>
<dbReference type="DNASU" id="103988"/>
<dbReference type="Ensembl" id="ENSMUST00000102920.4">
    <molecule id="P52792-1"/>
    <property type="protein sequence ID" value="ENSMUSP00000099984.4"/>
    <property type="gene ID" value="ENSMUSG00000041798.16"/>
</dbReference>
<dbReference type="Ensembl" id="ENSMUST00000109822.8">
    <molecule id="P52792-2"/>
    <property type="protein sequence ID" value="ENSMUSP00000105447.2"/>
    <property type="gene ID" value="ENSMUSG00000041798.16"/>
</dbReference>
<dbReference type="Ensembl" id="ENSMUST00000109823.9">
    <molecule id="P52792-2"/>
    <property type="protein sequence ID" value="ENSMUSP00000105448.3"/>
    <property type="gene ID" value="ENSMUSG00000041798.16"/>
</dbReference>
<dbReference type="GeneID" id="103988"/>
<dbReference type="KEGG" id="mmu:103988"/>
<dbReference type="UCSC" id="uc007hxn.2">
    <molecule id="P52792-1"/>
    <property type="organism name" value="mouse"/>
</dbReference>
<dbReference type="AGR" id="MGI:1270854"/>
<dbReference type="CTD" id="2645"/>
<dbReference type="MGI" id="MGI:1270854">
    <property type="gene designation" value="Gck"/>
</dbReference>
<dbReference type="VEuPathDB" id="HostDB:ENSMUSG00000041798"/>
<dbReference type="eggNOG" id="KOG1369">
    <property type="taxonomic scope" value="Eukaryota"/>
</dbReference>
<dbReference type="GeneTree" id="ENSGT00950000182787"/>
<dbReference type="HOGENOM" id="CLU_014393_5_3_1"/>
<dbReference type="InParanoid" id="P52792"/>
<dbReference type="OMA" id="ADCVQQF"/>
<dbReference type="OrthoDB" id="419537at2759"/>
<dbReference type="PhylomeDB" id="P52792"/>
<dbReference type="TreeFam" id="TF314238"/>
<dbReference type="Reactome" id="R-MMU-170822">
    <molecule id="P52792-2"/>
    <property type="pathway name" value="Regulation of Glucokinase by Glucokinase Regulatory Protein"/>
</dbReference>
<dbReference type="Reactome" id="R-MMU-70171">
    <molecule id="P52792-2"/>
    <property type="pathway name" value="Glycolysis"/>
</dbReference>
<dbReference type="SABIO-RK" id="P52792"/>
<dbReference type="UniPathway" id="UPA00109">
    <property type="reaction ID" value="UER00180"/>
</dbReference>
<dbReference type="UniPathway" id="UPA00242"/>
<dbReference type="BioGRID-ORCS" id="103988">
    <property type="hits" value="1 hit in 77 CRISPR screens"/>
</dbReference>
<dbReference type="ChiTaRS" id="Gk">
    <property type="organism name" value="mouse"/>
</dbReference>
<dbReference type="PRO" id="PR:P52792"/>
<dbReference type="Proteomes" id="UP000000589">
    <property type="component" value="Chromosome 11"/>
</dbReference>
<dbReference type="RNAct" id="P52792">
    <property type="molecule type" value="protein"/>
</dbReference>
<dbReference type="Bgee" id="ENSMUSG00000041798">
    <property type="expression patterns" value="Expressed in left lobe of liver and 70 other cell types or tissues"/>
</dbReference>
<dbReference type="ExpressionAtlas" id="P52792">
    <property type="expression patterns" value="baseline and differential"/>
</dbReference>
<dbReference type="GO" id="GO:0005829">
    <property type="term" value="C:cytosol"/>
    <property type="evidence" value="ECO:0000314"/>
    <property type="project" value="MGI"/>
</dbReference>
<dbReference type="GO" id="GO:0005739">
    <property type="term" value="C:mitochondrion"/>
    <property type="evidence" value="ECO:0000314"/>
    <property type="project" value="MGI"/>
</dbReference>
<dbReference type="GO" id="GO:0005634">
    <property type="term" value="C:nucleus"/>
    <property type="evidence" value="ECO:0000314"/>
    <property type="project" value="BHF-UCL"/>
</dbReference>
<dbReference type="GO" id="GO:0005524">
    <property type="term" value="F:ATP binding"/>
    <property type="evidence" value="ECO:0000250"/>
    <property type="project" value="UniProtKB"/>
</dbReference>
<dbReference type="GO" id="GO:0005536">
    <property type="term" value="F:D-glucose binding"/>
    <property type="evidence" value="ECO:0000250"/>
    <property type="project" value="UniProtKB"/>
</dbReference>
<dbReference type="GO" id="GO:0008865">
    <property type="term" value="F:fructokinase activity"/>
    <property type="evidence" value="ECO:0000250"/>
    <property type="project" value="UniProtKB"/>
</dbReference>
<dbReference type="GO" id="GO:0004340">
    <property type="term" value="F:glucokinase activity"/>
    <property type="evidence" value="ECO:0000314"/>
    <property type="project" value="MGI"/>
</dbReference>
<dbReference type="GO" id="GO:0004396">
    <property type="term" value="F:hexokinase activity"/>
    <property type="evidence" value="ECO:0000314"/>
    <property type="project" value="UniProtKB"/>
</dbReference>
<dbReference type="GO" id="GO:0019158">
    <property type="term" value="F:mannokinase activity"/>
    <property type="evidence" value="ECO:0000250"/>
    <property type="project" value="UniProtKB"/>
</dbReference>
<dbReference type="GO" id="GO:0070509">
    <property type="term" value="P:calcium ion import"/>
    <property type="evidence" value="ECO:0000315"/>
    <property type="project" value="UniProtKB"/>
</dbReference>
<dbReference type="GO" id="GO:0046835">
    <property type="term" value="P:carbohydrate phosphorylation"/>
    <property type="evidence" value="ECO:0000314"/>
    <property type="project" value="MGI"/>
</dbReference>
<dbReference type="GO" id="GO:0006002">
    <property type="term" value="P:fructose 6-phosphate metabolic process"/>
    <property type="evidence" value="ECO:0000250"/>
    <property type="project" value="UniProtKB"/>
</dbReference>
<dbReference type="GO" id="GO:0006007">
    <property type="term" value="P:glucose catabolic process"/>
    <property type="evidence" value="ECO:0000250"/>
    <property type="project" value="UniProtKB"/>
</dbReference>
<dbReference type="GO" id="GO:0042593">
    <property type="term" value="P:glucose homeostasis"/>
    <property type="evidence" value="ECO:0000315"/>
    <property type="project" value="UniProtKB"/>
</dbReference>
<dbReference type="GO" id="GO:0006006">
    <property type="term" value="P:glucose metabolic process"/>
    <property type="evidence" value="ECO:0000314"/>
    <property type="project" value="MGI"/>
</dbReference>
<dbReference type="GO" id="GO:0006096">
    <property type="term" value="P:glycolytic process"/>
    <property type="evidence" value="ECO:0007669"/>
    <property type="project" value="UniProtKB-UniPathway"/>
</dbReference>
<dbReference type="GO" id="GO:0001678">
    <property type="term" value="P:intracellular glucose homeostasis"/>
    <property type="evidence" value="ECO:0000315"/>
    <property type="project" value="UniProtKB"/>
</dbReference>
<dbReference type="GO" id="GO:0006013">
    <property type="term" value="P:mannose metabolic process"/>
    <property type="evidence" value="ECO:0000250"/>
    <property type="project" value="UniProtKB"/>
</dbReference>
<dbReference type="GO" id="GO:0006739">
    <property type="term" value="P:NADP metabolic process"/>
    <property type="evidence" value="ECO:0000315"/>
    <property type="project" value="MGI"/>
</dbReference>
<dbReference type="GO" id="GO:0045721">
    <property type="term" value="P:negative regulation of gluconeogenesis"/>
    <property type="evidence" value="ECO:0000250"/>
    <property type="project" value="UniProtKB"/>
</dbReference>
<dbReference type="GO" id="GO:0045725">
    <property type="term" value="P:positive regulation of glycogen biosynthetic process"/>
    <property type="evidence" value="ECO:0000250"/>
    <property type="project" value="UniProtKB"/>
</dbReference>
<dbReference type="GO" id="GO:0032024">
    <property type="term" value="P:positive regulation of insulin secretion"/>
    <property type="evidence" value="ECO:0000315"/>
    <property type="project" value="UniProtKB"/>
</dbReference>
<dbReference type="GO" id="GO:0050796">
    <property type="term" value="P:regulation of insulin secretion"/>
    <property type="evidence" value="ECO:0000315"/>
    <property type="project" value="MGI"/>
</dbReference>
<dbReference type="GO" id="GO:0043266">
    <property type="term" value="P:regulation of potassium ion transport"/>
    <property type="evidence" value="ECO:0000315"/>
    <property type="project" value="MGI"/>
</dbReference>
<dbReference type="CDD" id="cd24092">
    <property type="entry name" value="ASKHA_NBD_HK4_meta"/>
    <property type="match status" value="1"/>
</dbReference>
<dbReference type="FunFam" id="3.40.367.20:FF:000001">
    <property type="entry name" value="Hexokinase 1"/>
    <property type="match status" value="1"/>
</dbReference>
<dbReference type="FunFam" id="3.30.420.40:FF:000054">
    <property type="entry name" value="Phosphotransferase"/>
    <property type="match status" value="1"/>
</dbReference>
<dbReference type="Gene3D" id="3.30.420.40">
    <property type="match status" value="1"/>
</dbReference>
<dbReference type="Gene3D" id="3.40.367.20">
    <property type="match status" value="1"/>
</dbReference>
<dbReference type="InterPro" id="IPR043129">
    <property type="entry name" value="ATPase_NBD"/>
</dbReference>
<dbReference type="InterPro" id="IPR001312">
    <property type="entry name" value="Hexokinase"/>
</dbReference>
<dbReference type="InterPro" id="IPR019807">
    <property type="entry name" value="Hexokinase_BS"/>
</dbReference>
<dbReference type="InterPro" id="IPR022673">
    <property type="entry name" value="Hexokinase_C"/>
</dbReference>
<dbReference type="InterPro" id="IPR022672">
    <property type="entry name" value="Hexokinase_N"/>
</dbReference>
<dbReference type="PANTHER" id="PTHR19443">
    <property type="entry name" value="HEXOKINASE"/>
    <property type="match status" value="1"/>
</dbReference>
<dbReference type="PANTHER" id="PTHR19443:SF3">
    <property type="entry name" value="HEXOKINASE-4"/>
    <property type="match status" value="1"/>
</dbReference>
<dbReference type="Pfam" id="PF00349">
    <property type="entry name" value="Hexokinase_1"/>
    <property type="match status" value="1"/>
</dbReference>
<dbReference type="Pfam" id="PF03727">
    <property type="entry name" value="Hexokinase_2"/>
    <property type="match status" value="1"/>
</dbReference>
<dbReference type="PRINTS" id="PR00475">
    <property type="entry name" value="HEXOKINASE"/>
</dbReference>
<dbReference type="SUPFAM" id="SSF53067">
    <property type="entry name" value="Actin-like ATPase domain"/>
    <property type="match status" value="2"/>
</dbReference>
<dbReference type="PROSITE" id="PS00378">
    <property type="entry name" value="HEXOKINASE_1"/>
    <property type="match status" value="1"/>
</dbReference>
<dbReference type="PROSITE" id="PS51748">
    <property type="entry name" value="HEXOKINASE_2"/>
    <property type="match status" value="1"/>
</dbReference>
<feature type="chain" id="PRO_0000197594" description="Hexokinase-4">
    <location>
        <begin position="1"/>
        <end position="465"/>
    </location>
</feature>
<feature type="domain" description="Hexokinase" evidence="4">
    <location>
        <begin position="10"/>
        <end position="454"/>
    </location>
</feature>
<feature type="region of interest" description="Hexokinase small subdomain" evidence="4">
    <location>
        <begin position="67"/>
        <end position="203"/>
    </location>
</feature>
<feature type="region of interest" description="Hexokinase large subdomain" evidence="4">
    <location>
        <begin position="204"/>
        <end position="443"/>
    </location>
</feature>
<feature type="binding site" evidence="2">
    <location>
        <begin position="78"/>
        <end position="83"/>
    </location>
    <ligand>
        <name>ATP</name>
        <dbReference type="ChEBI" id="CHEBI:30616"/>
    </ligand>
</feature>
<feature type="binding site" evidence="3">
    <location>
        <begin position="151"/>
        <end position="152"/>
    </location>
    <ligand>
        <name>substrate</name>
    </ligand>
</feature>
<feature type="binding site" evidence="3">
    <location>
        <begin position="168"/>
        <end position="169"/>
    </location>
    <ligand>
        <name>substrate</name>
    </ligand>
</feature>
<feature type="binding site" evidence="3">
    <location>
        <begin position="204"/>
        <end position="205"/>
    </location>
    <ligand>
        <name>substrate</name>
    </ligand>
</feature>
<feature type="binding site" evidence="3">
    <location>
        <position position="228"/>
    </location>
    <ligand>
        <name>ATP</name>
        <dbReference type="ChEBI" id="CHEBI:30616"/>
    </ligand>
</feature>
<feature type="binding site" evidence="3">
    <location>
        <position position="231"/>
    </location>
    <ligand>
        <name>substrate</name>
    </ligand>
</feature>
<feature type="binding site" evidence="3">
    <location>
        <position position="256"/>
    </location>
    <ligand>
        <name>substrate</name>
    </ligand>
</feature>
<feature type="binding site" evidence="3">
    <location>
        <position position="290"/>
    </location>
    <ligand>
        <name>substrate</name>
    </ligand>
</feature>
<feature type="binding site" evidence="3">
    <location>
        <begin position="295"/>
        <end position="296"/>
    </location>
    <ligand>
        <name>ATP</name>
        <dbReference type="ChEBI" id="CHEBI:30616"/>
    </ligand>
</feature>
<feature type="binding site" evidence="3">
    <location>
        <begin position="332"/>
        <end position="336"/>
    </location>
    <ligand>
        <name>ATP</name>
        <dbReference type="ChEBI" id="CHEBI:30616"/>
    </ligand>
</feature>
<feature type="binding site" evidence="3">
    <location>
        <begin position="411"/>
        <end position="415"/>
    </location>
    <ligand>
        <name>ATP</name>
        <dbReference type="ChEBI" id="CHEBI:30616"/>
    </ligand>
</feature>
<feature type="splice variant" id="VSP_002076" description="In isoform 2." evidence="11">
    <original>MLDDRARMEATKKEK</original>
    <variation>MAVDTTRRGAQSLTL</variation>
    <location>
        <begin position="1"/>
        <end position="15"/>
    </location>
</feature>
<feature type="sequence conflict" description="In Ref. 4; AAA37703." evidence="14" ref="4">
    <original>F</original>
    <variation>L</variation>
    <location>
        <position position="133"/>
    </location>
</feature>
<feature type="sequence conflict" description="In Ref. 4; AAA37703." evidence="14" ref="4">
    <original>I</original>
    <variation>L</variation>
    <location>
        <position position="159"/>
    </location>
</feature>
<evidence type="ECO:0000250" key="1">
    <source>
        <dbReference type="UniProtKB" id="P17712"/>
    </source>
</evidence>
<evidence type="ECO:0000250" key="2">
    <source>
        <dbReference type="UniProtKB" id="P19367"/>
    </source>
</evidence>
<evidence type="ECO:0000250" key="3">
    <source>
        <dbReference type="UniProtKB" id="P35557"/>
    </source>
</evidence>
<evidence type="ECO:0000255" key="4">
    <source>
        <dbReference type="PROSITE-ProRule" id="PRU01084"/>
    </source>
</evidence>
<evidence type="ECO:0000269" key="5">
    <source>
    </source>
</evidence>
<evidence type="ECO:0000269" key="6">
    <source>
    </source>
</evidence>
<evidence type="ECO:0000269" key="7">
    <source>
    </source>
</evidence>
<evidence type="ECO:0000269" key="8">
    <source>
    </source>
</evidence>
<evidence type="ECO:0000269" key="9">
    <source>
    </source>
</evidence>
<evidence type="ECO:0000269" key="10">
    <source>
    </source>
</evidence>
<evidence type="ECO:0000303" key="11">
    <source>
    </source>
</evidence>
<evidence type="ECO:0000303" key="12">
    <source>
    </source>
</evidence>
<evidence type="ECO:0000303" key="13">
    <source>
    </source>
</evidence>
<evidence type="ECO:0000305" key="14"/>
<evidence type="ECO:0000305" key="15">
    <source>
    </source>
</evidence>
<evidence type="ECO:0000312" key="16">
    <source>
        <dbReference type="MGI" id="MGI:1270854"/>
    </source>
</evidence>
<protein>
    <recommendedName>
        <fullName evidence="14">Hexokinase-4</fullName>
        <shortName evidence="14">HK4</shortName>
        <ecNumber evidence="9">2.7.1.1</ecNumber>
    </recommendedName>
    <alternativeName>
        <fullName evidence="12 13">Glucokinase</fullName>
    </alternativeName>
    <alternativeName>
        <fullName evidence="1">Hexokinase type IV</fullName>
        <shortName evidence="1">HK IV</shortName>
    </alternativeName>
    <alternativeName>
        <fullName evidence="1">Hexokinase-D</fullName>
    </alternativeName>
</protein>
<name>HXK4_MOUSE</name>
<organism>
    <name type="scientific">Mus musculus</name>
    <name type="common">Mouse</name>
    <dbReference type="NCBI Taxonomy" id="10090"/>
    <lineage>
        <taxon>Eukaryota</taxon>
        <taxon>Metazoa</taxon>
        <taxon>Chordata</taxon>
        <taxon>Craniata</taxon>
        <taxon>Vertebrata</taxon>
        <taxon>Euteleostomi</taxon>
        <taxon>Mammalia</taxon>
        <taxon>Eutheria</taxon>
        <taxon>Euarchontoglires</taxon>
        <taxon>Glires</taxon>
        <taxon>Rodentia</taxon>
        <taxon>Myomorpha</taxon>
        <taxon>Muroidea</taxon>
        <taxon>Muridae</taxon>
        <taxon>Murinae</taxon>
        <taxon>Mus</taxon>
        <taxon>Mus</taxon>
    </lineage>
</organism>